<keyword id="KW-0002">3D-structure</keyword>
<keyword id="KW-0007">Acetylation</keyword>
<keyword id="KW-0009">Actin-binding</keyword>
<keyword id="KW-0025">Alternative splicing</keyword>
<keyword id="KW-1003">Cell membrane</keyword>
<keyword id="KW-0903">Direct protein sequencing</keyword>
<keyword id="KW-1017">Isopeptide bond</keyword>
<keyword id="KW-0472">Membrane</keyword>
<keyword id="KW-0488">Methylation</keyword>
<keyword id="KW-0597">Phosphoprotein</keyword>
<keyword id="KW-1267">Proteomics identification</keyword>
<keyword id="KW-1185">Reference proteome</keyword>
<keyword id="KW-0832">Ubl conjugation</keyword>
<dbReference type="EMBL" id="M98474">
    <property type="protein sequence ID" value="AAA35648.1"/>
    <property type="molecule type" value="mRNA"/>
</dbReference>
<dbReference type="EMBL" id="L12168">
    <property type="protein sequence ID" value="AAA35507.1"/>
    <property type="molecule type" value="mRNA"/>
</dbReference>
<dbReference type="EMBL" id="BT007152">
    <property type="protein sequence ID" value="AAP35816.1"/>
    <property type="molecule type" value="mRNA"/>
</dbReference>
<dbReference type="EMBL" id="CR457409">
    <property type="protein sequence ID" value="CAG33690.1"/>
    <property type="molecule type" value="mRNA"/>
</dbReference>
<dbReference type="EMBL" id="AK222513">
    <property type="protein sequence ID" value="BAD96233.1"/>
    <property type="molecule type" value="mRNA"/>
</dbReference>
<dbReference type="EMBL" id="AL512599">
    <property type="status" value="NOT_ANNOTATED_CDS"/>
    <property type="molecule type" value="Genomic_DNA"/>
</dbReference>
<dbReference type="EMBL" id="BC013963">
    <property type="protein sequence ID" value="AAH13963.1"/>
    <property type="molecule type" value="mRNA"/>
</dbReference>
<dbReference type="EMBL" id="BC095440">
    <property type="protein sequence ID" value="AAH95440.1"/>
    <property type="molecule type" value="mRNA"/>
</dbReference>
<dbReference type="CCDS" id="CCDS41309.1">
    <molecule id="Q01518-1"/>
</dbReference>
<dbReference type="CCDS" id="CCDS81304.1">
    <molecule id="Q01518-2"/>
</dbReference>
<dbReference type="PIR" id="A48120">
    <property type="entry name" value="A48120"/>
</dbReference>
<dbReference type="RefSeq" id="NP_001099000.2">
    <molecule id="Q01518-1"/>
    <property type="nucleotide sequence ID" value="NM_001105530.2"/>
</dbReference>
<dbReference type="RefSeq" id="NP_001317431.2">
    <molecule id="Q01518-2"/>
    <property type="nucleotide sequence ID" value="NM_001330502.2"/>
</dbReference>
<dbReference type="RefSeq" id="NP_001337404.2">
    <molecule id="Q01518-1"/>
    <property type="nucleotide sequence ID" value="NM_001350475.2"/>
</dbReference>
<dbReference type="RefSeq" id="NP_001337405.2">
    <molecule id="Q01518-1"/>
    <property type="nucleotide sequence ID" value="NM_001350476.2"/>
</dbReference>
<dbReference type="RefSeq" id="NP_001337406.2">
    <molecule id="Q01518-1"/>
    <property type="nucleotide sequence ID" value="NM_001350477.3"/>
</dbReference>
<dbReference type="RefSeq" id="NP_001337407.2">
    <molecule id="Q01518-1"/>
    <property type="nucleotide sequence ID" value="NM_001350478.2"/>
</dbReference>
<dbReference type="RefSeq" id="NP_001337408.2">
    <molecule id="Q01518-1"/>
    <property type="nucleotide sequence ID" value="NM_001350479.2"/>
</dbReference>
<dbReference type="RefSeq" id="NP_001337409.2">
    <molecule id="Q01518-1"/>
    <property type="nucleotide sequence ID" value="NM_001350480.2"/>
</dbReference>
<dbReference type="RefSeq" id="NP_001337410.2">
    <molecule id="Q01518-1"/>
    <property type="nucleotide sequence ID" value="NM_001350481.2"/>
</dbReference>
<dbReference type="RefSeq" id="NP_001337411.2">
    <molecule id="Q01518-2"/>
    <property type="nucleotide sequence ID" value="NM_001350482.2"/>
</dbReference>
<dbReference type="RefSeq" id="NP_001337412.2">
    <molecule id="Q01518-2"/>
    <property type="nucleotide sequence ID" value="NM_001350483.2"/>
</dbReference>
<dbReference type="RefSeq" id="NP_001337413.2">
    <molecule id="Q01518-2"/>
    <property type="nucleotide sequence ID" value="NM_001350484.2"/>
</dbReference>
<dbReference type="RefSeq" id="NP_001337414.2">
    <molecule id="Q01518-2"/>
    <property type="nucleotide sequence ID" value="NM_001350485.2"/>
</dbReference>
<dbReference type="RefSeq" id="NP_006358.2">
    <molecule id="Q01518-1"/>
    <property type="nucleotide sequence ID" value="NM_006367.4"/>
</dbReference>
<dbReference type="RefSeq" id="XP_005270425.1">
    <property type="nucleotide sequence ID" value="XM_005270368.1"/>
</dbReference>
<dbReference type="RefSeq" id="XP_011538811.1">
    <property type="nucleotide sequence ID" value="XM_011540509.1"/>
</dbReference>
<dbReference type="RefSeq" id="XP_011538812.1">
    <molecule id="Q01518-1"/>
    <property type="nucleotide sequence ID" value="XM_011540510.2"/>
</dbReference>
<dbReference type="RefSeq" id="XP_011538813.1">
    <property type="nucleotide sequence ID" value="XM_011540511.1"/>
</dbReference>
<dbReference type="RefSeq" id="XP_011538814.1">
    <property type="nucleotide sequence ID" value="XM_011540512.1"/>
</dbReference>
<dbReference type="RefSeq" id="XP_011538815.1">
    <property type="nucleotide sequence ID" value="XM_011540513.2"/>
</dbReference>
<dbReference type="RefSeq" id="XP_011538816.1">
    <property type="nucleotide sequence ID" value="XM_011540514.1"/>
</dbReference>
<dbReference type="RefSeq" id="XP_011538817.1">
    <molecule id="Q01518-2"/>
    <property type="nucleotide sequence ID" value="XM_011540515.2"/>
</dbReference>
<dbReference type="RefSeq" id="XP_016855556.1">
    <property type="nucleotide sequence ID" value="XM_017000067.1"/>
</dbReference>
<dbReference type="RefSeq" id="XP_016855557.1">
    <property type="nucleotide sequence ID" value="XM_017000068.1"/>
</dbReference>
<dbReference type="RefSeq" id="XP_016855558.1">
    <molecule id="Q01518-1"/>
    <property type="nucleotide sequence ID" value="XM_017000069.2"/>
</dbReference>
<dbReference type="RefSeq" id="XP_016855559.1">
    <property type="nucleotide sequence ID" value="XM_017000070.1"/>
</dbReference>
<dbReference type="RefSeq" id="XP_016855560.1">
    <property type="nucleotide sequence ID" value="XM_017000071.1"/>
</dbReference>
<dbReference type="RefSeq" id="XP_016855561.1">
    <property type="nucleotide sequence ID" value="XM_017000072.1"/>
</dbReference>
<dbReference type="RefSeq" id="XP_047287376.1">
    <molecule id="Q01518-1"/>
    <property type="nucleotide sequence ID" value="XM_047431420.1"/>
</dbReference>
<dbReference type="RefSeq" id="XP_047287445.1">
    <molecule id="Q01518-1"/>
    <property type="nucleotide sequence ID" value="XM_047431489.1"/>
</dbReference>
<dbReference type="RefSeq" id="XP_047287476.1">
    <molecule id="Q01518-2"/>
    <property type="nucleotide sequence ID" value="XM_047431520.1"/>
</dbReference>
<dbReference type="RefSeq" id="XP_047287536.1">
    <molecule id="Q01518-2"/>
    <property type="nucleotide sequence ID" value="XM_047431580.1"/>
</dbReference>
<dbReference type="RefSeq" id="XP_047287559.1">
    <molecule id="Q01518-2"/>
    <property type="nucleotide sequence ID" value="XM_047431603.1"/>
</dbReference>
<dbReference type="RefSeq" id="XP_047287572.1">
    <molecule id="Q01518-2"/>
    <property type="nucleotide sequence ID" value="XM_047431616.1"/>
</dbReference>
<dbReference type="RefSeq" id="XP_047287584.1">
    <molecule id="Q01518-2"/>
    <property type="nucleotide sequence ID" value="XM_047431628.1"/>
</dbReference>
<dbReference type="RefSeq" id="XP_047287592.1">
    <molecule id="Q01518-2"/>
    <property type="nucleotide sequence ID" value="XM_047431636.1"/>
</dbReference>
<dbReference type="PDB" id="1K8F">
    <property type="method" value="X-ray"/>
    <property type="resolution" value="2.80 A"/>
    <property type="chains" value="A/B/C/D=319-475"/>
</dbReference>
<dbReference type="PDBsum" id="1K8F"/>
<dbReference type="SMR" id="Q01518"/>
<dbReference type="BioGRID" id="115750">
    <property type="interactions" value="201"/>
</dbReference>
<dbReference type="CORUM" id="Q01518"/>
<dbReference type="DIP" id="DIP-62063N"/>
<dbReference type="FunCoup" id="Q01518">
    <property type="interactions" value="1491"/>
</dbReference>
<dbReference type="IntAct" id="Q01518">
    <property type="interactions" value="50"/>
</dbReference>
<dbReference type="MINT" id="Q01518"/>
<dbReference type="STRING" id="9606.ENSP00000361883"/>
<dbReference type="CarbonylDB" id="Q01518"/>
<dbReference type="GlyCosmos" id="Q01518">
    <property type="glycosylation" value="2 sites, 2 glycans"/>
</dbReference>
<dbReference type="GlyGen" id="Q01518">
    <property type="glycosylation" value="3 sites, 2 O-linked glycans (3 sites)"/>
</dbReference>
<dbReference type="iPTMnet" id="Q01518"/>
<dbReference type="MetOSite" id="Q01518"/>
<dbReference type="PhosphoSitePlus" id="Q01518"/>
<dbReference type="SwissPalm" id="Q01518"/>
<dbReference type="BioMuta" id="CAP1"/>
<dbReference type="DMDM" id="308153681"/>
<dbReference type="OGP" id="Q01518"/>
<dbReference type="REPRODUCTION-2DPAGE" id="IPI00639931"/>
<dbReference type="CPTAC" id="CPTAC-325"/>
<dbReference type="CPTAC" id="CPTAC-326"/>
<dbReference type="jPOST" id="Q01518"/>
<dbReference type="MassIVE" id="Q01518"/>
<dbReference type="PaxDb" id="9606-ENSP00000361883"/>
<dbReference type="PeptideAtlas" id="Q01518"/>
<dbReference type="PRIDE" id="Q01518"/>
<dbReference type="ProteomicsDB" id="57962">
    <molecule id="Q01518-1"/>
</dbReference>
<dbReference type="ProteomicsDB" id="57963">
    <molecule id="Q01518-2"/>
</dbReference>
<dbReference type="Pumba" id="Q01518"/>
<dbReference type="Antibodypedia" id="32000">
    <property type="antibodies" value="215 antibodies from 30 providers"/>
</dbReference>
<dbReference type="DNASU" id="10487"/>
<dbReference type="Ensembl" id="ENST00000340450.7">
    <molecule id="Q01518-2"/>
    <property type="protein sequence ID" value="ENSP00000344832.3"/>
    <property type="gene ID" value="ENSG00000131236.18"/>
</dbReference>
<dbReference type="Ensembl" id="ENST00000372792.7">
    <molecule id="Q01518-1"/>
    <property type="protein sequence ID" value="ENSP00000361878.2"/>
    <property type="gene ID" value="ENSG00000131236.18"/>
</dbReference>
<dbReference type="Ensembl" id="ENST00000372797.7">
    <molecule id="Q01518-1"/>
    <property type="protein sequence ID" value="ENSP00000361883.3"/>
    <property type="gene ID" value="ENSG00000131236.18"/>
</dbReference>
<dbReference type="Ensembl" id="ENST00000372798.5">
    <molecule id="Q01518-2"/>
    <property type="protein sequence ID" value="ENSP00000361884.1"/>
    <property type="gene ID" value="ENSG00000131236.18"/>
</dbReference>
<dbReference type="Ensembl" id="ENST00000372802.5">
    <molecule id="Q01518-2"/>
    <property type="protein sequence ID" value="ENSP00000361888.1"/>
    <property type="gene ID" value="ENSG00000131236.18"/>
</dbReference>
<dbReference type="Ensembl" id="ENST00000372805.8">
    <molecule id="Q01518-1"/>
    <property type="protein sequence ID" value="ENSP00000361891.3"/>
    <property type="gene ID" value="ENSG00000131236.18"/>
</dbReference>
<dbReference type="GeneID" id="10487"/>
<dbReference type="KEGG" id="hsa:10487"/>
<dbReference type="MANE-Select" id="ENST00000372805.8">
    <property type="protein sequence ID" value="ENSP00000361891.3"/>
    <property type="RefSeq nucleotide sequence ID" value="NM_006367.4"/>
    <property type="RefSeq protein sequence ID" value="NP_006358.2"/>
</dbReference>
<dbReference type="UCSC" id="uc001cey.5">
    <molecule id="Q01518-1"/>
    <property type="organism name" value="human"/>
</dbReference>
<dbReference type="AGR" id="HGNC:20040"/>
<dbReference type="CTD" id="10487"/>
<dbReference type="DisGeNET" id="10487"/>
<dbReference type="GeneCards" id="CAP1"/>
<dbReference type="HGNC" id="HGNC:20040">
    <property type="gene designation" value="CAP1"/>
</dbReference>
<dbReference type="HPA" id="ENSG00000131236">
    <property type="expression patterns" value="Low tissue specificity"/>
</dbReference>
<dbReference type="MIM" id="617801">
    <property type="type" value="gene"/>
</dbReference>
<dbReference type="neXtProt" id="NX_Q01518"/>
<dbReference type="OpenTargets" id="ENSG00000131236"/>
<dbReference type="PharmGKB" id="PA399"/>
<dbReference type="VEuPathDB" id="HostDB:ENSG00000131236"/>
<dbReference type="eggNOG" id="KOG2675">
    <property type="taxonomic scope" value="Eukaryota"/>
</dbReference>
<dbReference type="GeneTree" id="ENSGT00390000017955"/>
<dbReference type="HOGENOM" id="CLU_015780_1_1_1"/>
<dbReference type="InParanoid" id="Q01518"/>
<dbReference type="OMA" id="KSQQTHK"/>
<dbReference type="OrthoDB" id="1601at2759"/>
<dbReference type="PAN-GO" id="Q01518">
    <property type="GO annotations" value="6 GO annotations based on evolutionary models"/>
</dbReference>
<dbReference type="PhylomeDB" id="Q01518"/>
<dbReference type="TreeFam" id="TF313791"/>
<dbReference type="PathwayCommons" id="Q01518"/>
<dbReference type="Reactome" id="R-HSA-114608">
    <property type="pathway name" value="Platelet degranulation"/>
</dbReference>
<dbReference type="Reactome" id="R-HSA-428890">
    <property type="pathway name" value="Role of ABL in ROBO-SLIT signaling"/>
</dbReference>
<dbReference type="Reactome" id="R-HSA-6798695">
    <property type="pathway name" value="Neutrophil degranulation"/>
</dbReference>
<dbReference type="SignaLink" id="Q01518"/>
<dbReference type="SIGNOR" id="Q01518"/>
<dbReference type="BioGRID-ORCS" id="10487">
    <property type="hits" value="322 hits in 1147 CRISPR screens"/>
</dbReference>
<dbReference type="CD-CODE" id="DEE660B4">
    <property type="entry name" value="Stress granule"/>
</dbReference>
<dbReference type="CD-CODE" id="FB4E32DD">
    <property type="entry name" value="Presynaptic clusters and postsynaptic densities"/>
</dbReference>
<dbReference type="ChiTaRS" id="CAP1">
    <property type="organism name" value="human"/>
</dbReference>
<dbReference type="EvolutionaryTrace" id="Q01518"/>
<dbReference type="GeneWiki" id="CAP1"/>
<dbReference type="GenomeRNAi" id="10487"/>
<dbReference type="Pharos" id="Q01518">
    <property type="development level" value="Tbio"/>
</dbReference>
<dbReference type="PRO" id="PR:Q01518"/>
<dbReference type="Proteomes" id="UP000005640">
    <property type="component" value="Chromosome 1"/>
</dbReference>
<dbReference type="RNAct" id="Q01518">
    <property type="molecule type" value="protein"/>
</dbReference>
<dbReference type="Bgee" id="ENSG00000131236">
    <property type="expression patterns" value="Expressed in blood and 212 other cell types or tissues"/>
</dbReference>
<dbReference type="ExpressionAtlas" id="Q01518">
    <property type="expression patterns" value="baseline and differential"/>
</dbReference>
<dbReference type="GO" id="GO:0035578">
    <property type="term" value="C:azurophil granule lumen"/>
    <property type="evidence" value="ECO:0000304"/>
    <property type="project" value="Reactome"/>
</dbReference>
<dbReference type="GO" id="GO:0030864">
    <property type="term" value="C:cortical actin cytoskeleton"/>
    <property type="evidence" value="ECO:0007669"/>
    <property type="project" value="Ensembl"/>
</dbReference>
<dbReference type="GO" id="GO:0005737">
    <property type="term" value="C:cytoplasm"/>
    <property type="evidence" value="ECO:0000318"/>
    <property type="project" value="GO_Central"/>
</dbReference>
<dbReference type="GO" id="GO:0070062">
    <property type="term" value="C:extracellular exosome"/>
    <property type="evidence" value="ECO:0007005"/>
    <property type="project" value="UniProtKB"/>
</dbReference>
<dbReference type="GO" id="GO:0005576">
    <property type="term" value="C:extracellular region"/>
    <property type="evidence" value="ECO:0000304"/>
    <property type="project" value="Reactome"/>
</dbReference>
<dbReference type="GO" id="GO:0005925">
    <property type="term" value="C:focal adhesion"/>
    <property type="evidence" value="ECO:0007005"/>
    <property type="project" value="UniProtKB"/>
</dbReference>
<dbReference type="GO" id="GO:0098978">
    <property type="term" value="C:glutamatergic synapse"/>
    <property type="evidence" value="ECO:0007669"/>
    <property type="project" value="Ensembl"/>
</dbReference>
<dbReference type="GO" id="GO:0005886">
    <property type="term" value="C:plasma membrane"/>
    <property type="evidence" value="ECO:0007669"/>
    <property type="project" value="UniProtKB-SubCell"/>
</dbReference>
<dbReference type="GO" id="GO:0098794">
    <property type="term" value="C:postsynapse"/>
    <property type="evidence" value="ECO:0007669"/>
    <property type="project" value="Ensembl"/>
</dbReference>
<dbReference type="GO" id="GO:0098793">
    <property type="term" value="C:presynapse"/>
    <property type="evidence" value="ECO:0007669"/>
    <property type="project" value="Ensembl"/>
</dbReference>
<dbReference type="GO" id="GO:0003779">
    <property type="term" value="F:actin binding"/>
    <property type="evidence" value="ECO:0000318"/>
    <property type="project" value="GO_Central"/>
</dbReference>
<dbReference type="GO" id="GO:0008179">
    <property type="term" value="F:adenylate cyclase binding"/>
    <property type="evidence" value="ECO:0000318"/>
    <property type="project" value="GO_Central"/>
</dbReference>
<dbReference type="GO" id="GO:0007015">
    <property type="term" value="P:actin filament organization"/>
    <property type="evidence" value="ECO:0000318"/>
    <property type="project" value="GO_Central"/>
</dbReference>
<dbReference type="GO" id="GO:0007190">
    <property type="term" value="P:activation of adenylate cyclase activity"/>
    <property type="evidence" value="ECO:0000304"/>
    <property type="project" value="ProtInc"/>
</dbReference>
<dbReference type="GO" id="GO:0001667">
    <property type="term" value="P:ameboidal-type cell migration"/>
    <property type="evidence" value="ECO:0007669"/>
    <property type="project" value="Ensembl"/>
</dbReference>
<dbReference type="GO" id="GO:0019933">
    <property type="term" value="P:cAMP-mediated signaling"/>
    <property type="evidence" value="ECO:0000318"/>
    <property type="project" value="GO_Central"/>
</dbReference>
<dbReference type="GO" id="GO:0000902">
    <property type="term" value="P:cell morphogenesis"/>
    <property type="evidence" value="ECO:0000318"/>
    <property type="project" value="GO_Central"/>
</dbReference>
<dbReference type="GO" id="GO:0007163">
    <property type="term" value="P:establishment or maintenance of cell polarity"/>
    <property type="evidence" value="ECO:0000304"/>
    <property type="project" value="ProtInc"/>
</dbReference>
<dbReference type="GO" id="GO:0098885">
    <property type="term" value="P:modification of postsynaptic actin cytoskeleton"/>
    <property type="evidence" value="ECO:0007669"/>
    <property type="project" value="Ensembl"/>
</dbReference>
<dbReference type="GO" id="GO:0006898">
    <property type="term" value="P:receptor-mediated endocytosis"/>
    <property type="evidence" value="ECO:0007669"/>
    <property type="project" value="Ensembl"/>
</dbReference>
<dbReference type="GO" id="GO:0007165">
    <property type="term" value="P:signal transduction"/>
    <property type="evidence" value="ECO:0000304"/>
    <property type="project" value="ProtInc"/>
</dbReference>
<dbReference type="FunFam" id="1.25.40.330:FF:000001">
    <property type="entry name" value="Adenylyl cyclase-associated protein"/>
    <property type="match status" value="1"/>
</dbReference>
<dbReference type="FunFam" id="2.160.20.70:FF:000001">
    <property type="entry name" value="Adenylyl cyclase-associated protein"/>
    <property type="match status" value="1"/>
</dbReference>
<dbReference type="Gene3D" id="2.160.20.70">
    <property type="match status" value="1"/>
</dbReference>
<dbReference type="Gene3D" id="1.25.40.330">
    <property type="entry name" value="Adenylate cyclase-associated CAP, N-terminal domain"/>
    <property type="match status" value="1"/>
</dbReference>
<dbReference type="InterPro" id="IPR001837">
    <property type="entry name" value="Adenylate_cyclase-assoc_CAP"/>
</dbReference>
<dbReference type="InterPro" id="IPR013912">
    <property type="entry name" value="Adenylate_cyclase-assoc_CAP_C"/>
</dbReference>
<dbReference type="InterPro" id="IPR013992">
    <property type="entry name" value="Adenylate_cyclase-assoc_CAP_N"/>
</dbReference>
<dbReference type="InterPro" id="IPR017901">
    <property type="entry name" value="C-CAP_CF_C-like"/>
</dbReference>
<dbReference type="InterPro" id="IPR016098">
    <property type="entry name" value="CAP/MinC_C"/>
</dbReference>
<dbReference type="InterPro" id="IPR036223">
    <property type="entry name" value="CAP_C_sf"/>
</dbReference>
<dbReference type="InterPro" id="IPR028417">
    <property type="entry name" value="CAP_CS_C"/>
</dbReference>
<dbReference type="InterPro" id="IPR018106">
    <property type="entry name" value="CAP_CS_N"/>
</dbReference>
<dbReference type="InterPro" id="IPR053950">
    <property type="entry name" value="CAP_N"/>
</dbReference>
<dbReference type="InterPro" id="IPR036222">
    <property type="entry name" value="CAP_N_sf"/>
</dbReference>
<dbReference type="InterPro" id="IPR006599">
    <property type="entry name" value="CARP_motif"/>
</dbReference>
<dbReference type="PANTHER" id="PTHR10652">
    <property type="entry name" value="ADENYLYL CYCLASE-ASSOCIATED PROTEIN"/>
    <property type="match status" value="1"/>
</dbReference>
<dbReference type="PANTHER" id="PTHR10652:SF1">
    <property type="entry name" value="ADENYLYL CYCLASE-ASSOCIATED PROTEIN 1"/>
    <property type="match status" value="1"/>
</dbReference>
<dbReference type="Pfam" id="PF08603">
    <property type="entry name" value="CAP_C"/>
    <property type="match status" value="1"/>
</dbReference>
<dbReference type="Pfam" id="PF21938">
    <property type="entry name" value="CAP_N"/>
    <property type="match status" value="1"/>
</dbReference>
<dbReference type="Pfam" id="PF01213">
    <property type="entry name" value="CAP_N-CM"/>
    <property type="match status" value="1"/>
</dbReference>
<dbReference type="SMART" id="SM00673">
    <property type="entry name" value="CARP"/>
    <property type="match status" value="2"/>
</dbReference>
<dbReference type="SUPFAM" id="SSF69340">
    <property type="entry name" value="C-terminal domain of adenylylcyclase associated protein"/>
    <property type="match status" value="1"/>
</dbReference>
<dbReference type="SUPFAM" id="SSF101278">
    <property type="entry name" value="N-terminal domain of adenylylcyclase associated protein, CAP"/>
    <property type="match status" value="1"/>
</dbReference>
<dbReference type="PROSITE" id="PS51329">
    <property type="entry name" value="C_CAP_COFACTOR_C"/>
    <property type="match status" value="1"/>
</dbReference>
<dbReference type="PROSITE" id="PS01088">
    <property type="entry name" value="CAP_1"/>
    <property type="match status" value="1"/>
</dbReference>
<dbReference type="PROSITE" id="PS01089">
    <property type="entry name" value="CAP_2"/>
    <property type="match status" value="1"/>
</dbReference>
<evidence type="ECO:0000250" key="1"/>
<evidence type="ECO:0000250" key="2">
    <source>
        <dbReference type="UniProtKB" id="P40124"/>
    </source>
</evidence>
<evidence type="ECO:0000255" key="3">
    <source>
        <dbReference type="PROSITE-ProRule" id="PRU00659"/>
    </source>
</evidence>
<evidence type="ECO:0000256" key="4">
    <source>
        <dbReference type="SAM" id="MobiDB-lite"/>
    </source>
</evidence>
<evidence type="ECO:0000269" key="5">
    <source>
    </source>
</evidence>
<evidence type="ECO:0000269" key="6">
    <source>
    </source>
</evidence>
<evidence type="ECO:0000269" key="7">
    <source>
    </source>
</evidence>
<evidence type="ECO:0000269" key="8">
    <source ref="2"/>
</evidence>
<evidence type="ECO:0000269" key="9">
    <source ref="3"/>
</evidence>
<evidence type="ECO:0000269" key="10">
    <source ref="4"/>
</evidence>
<evidence type="ECO:0000269" key="11">
    <source ref="5"/>
</evidence>
<evidence type="ECO:0000305" key="12"/>
<evidence type="ECO:0007744" key="13">
    <source>
    </source>
</evidence>
<evidence type="ECO:0007744" key="14">
    <source>
    </source>
</evidence>
<evidence type="ECO:0007744" key="15">
    <source>
    </source>
</evidence>
<evidence type="ECO:0007744" key="16">
    <source>
    </source>
</evidence>
<evidence type="ECO:0007744" key="17">
    <source>
    </source>
</evidence>
<evidence type="ECO:0007744" key="18">
    <source>
    </source>
</evidence>
<evidence type="ECO:0007744" key="19">
    <source>
    </source>
</evidence>
<evidence type="ECO:0007744" key="20">
    <source>
    </source>
</evidence>
<evidence type="ECO:0007744" key="21">
    <source>
    </source>
</evidence>
<evidence type="ECO:0007744" key="22">
    <source>
    </source>
</evidence>
<evidence type="ECO:0007744" key="23">
    <source>
    </source>
</evidence>
<evidence type="ECO:0007829" key="24">
    <source>
        <dbReference type="PDB" id="1K8F"/>
    </source>
</evidence>
<comment type="function">
    <text>Directly regulates filament dynamics and has been implicated in a number of complex developmental and morphological processes, including mRNA localization and the establishment of cell polarity.</text>
</comment>
<comment type="subunit">
    <text>Homodimer. Binds actin monomers.</text>
</comment>
<comment type="interaction">
    <interactant intactId="EBI-2808398">
        <id>Q01518</id>
    </interactant>
    <interactant intactId="EBI-349854">
        <id>P13569</id>
        <label>CFTR</label>
    </interactant>
    <organismsDiffer>false</organismsDiffer>
    <experiments>14</experiments>
</comment>
<comment type="interaction">
    <interactant intactId="EBI-2808398">
        <id>Q01518</id>
    </interactant>
    <interactant intactId="EBI-25475894">
        <id>P0DTC3</id>
        <label>3a</label>
    </interactant>
    <organismsDiffer>true</organismsDiffer>
    <experiments>3</experiments>
</comment>
<comment type="interaction">
    <interactant intactId="EBI-2808398">
        <id>Q01518</id>
    </interactant>
    <interactant intactId="EBI-26585631">
        <id>Q2GHU2</id>
        <label>ECH_0166</label>
    </interactant>
    <organismsDiffer>true</organismsDiffer>
    <experiments>4</experiments>
</comment>
<comment type="subcellular location">
    <subcellularLocation>
        <location evidence="1">Cell membrane</location>
        <topology evidence="1">Peripheral membrane protein</topology>
    </subcellularLocation>
</comment>
<comment type="alternative products">
    <event type="alternative splicing"/>
    <isoform>
        <id>Q01518-1</id>
        <name>1</name>
        <sequence type="displayed"/>
    </isoform>
    <isoform>
        <id>Q01518-2</id>
        <name>2</name>
        <sequence type="described" ref="VSP_036038"/>
    </isoform>
</comment>
<comment type="similarity">
    <text evidence="12">Belongs to the CAP family.</text>
</comment>
<feature type="initiator methionine" description="Removed" evidence="5 14 19 20">
    <location>
        <position position="1"/>
    </location>
</feature>
<feature type="chain" id="PRO_0000205696" description="Adenylyl cyclase-associated protein 1">
    <location>
        <begin position="2"/>
        <end position="475"/>
    </location>
</feature>
<feature type="domain" description="C-CAP/cofactor C-like" evidence="3">
    <location>
        <begin position="319"/>
        <end position="453"/>
    </location>
</feature>
<feature type="region of interest" description="Disordered" evidence="4">
    <location>
        <begin position="216"/>
        <end position="237"/>
    </location>
</feature>
<feature type="region of interest" description="Disordered" evidence="4">
    <location>
        <begin position="278"/>
        <end position="319"/>
    </location>
</feature>
<feature type="compositionally biased region" description="Low complexity" evidence="4">
    <location>
        <begin position="218"/>
        <end position="228"/>
    </location>
</feature>
<feature type="modified residue" description="N-acetylalanine" evidence="5 14 19 20">
    <location>
        <position position="2"/>
    </location>
</feature>
<feature type="modified residue" description="Phosphotyrosine" evidence="2">
    <location>
        <position position="31"/>
    </location>
</feature>
<feature type="modified residue" description="Phosphoserine" evidence="18">
    <location>
        <position position="34"/>
    </location>
</feature>
<feature type="modified residue" description="N6-acetyllysine" evidence="15">
    <location>
        <position position="81"/>
    </location>
</feature>
<feature type="modified residue" description="N6-methyllysine" evidence="22">
    <location>
        <position position="287"/>
    </location>
</feature>
<feature type="modified residue" description="Phosphoserine" evidence="18">
    <location>
        <position position="290"/>
    </location>
</feature>
<feature type="modified residue" description="Phosphoserine" evidence="13 18">
    <location>
        <position position="295"/>
    </location>
</feature>
<feature type="modified residue" description="Phosphoserine" evidence="18">
    <location>
        <position position="301"/>
    </location>
</feature>
<feature type="modified residue" description="Phosphothreonine" evidence="17">
    <location>
        <position position="307"/>
    </location>
</feature>
<feature type="modified residue" description="Phosphoserine" evidence="13 17 18 21">
    <location>
        <position position="308"/>
    </location>
</feature>
<feature type="modified residue" description="Phosphoserine" evidence="13 16 17 18 21">
    <location>
        <position position="310"/>
    </location>
</feature>
<feature type="cross-link" description="Glycyl lysine isopeptide (Lys-Gly) (interchain with G-Cter in SUMO1)" evidence="23">
    <location>
        <position position="348"/>
    </location>
</feature>
<feature type="splice variant" id="VSP_036038" description="In isoform 2." evidence="12">
    <location>
        <position position="38"/>
    </location>
</feature>
<feature type="sequence variant" id="VAR_028419" description="In dbSNP:rs11207440." evidence="6 7 8 9 10 11">
    <original>C</original>
    <variation>G</variation>
    <location>
        <position position="229"/>
    </location>
</feature>
<feature type="sequence variant" id="VAR_028420" description="In dbSNP:rs6665926." evidence="6 7 8 9 10 11">
    <original>C</original>
    <variation>G</variation>
    <location>
        <position position="236"/>
    </location>
</feature>
<feature type="sequence variant" id="VAR_028421" description="In dbSNP:rs6665933." evidence="6 7 8 9 10 11">
    <original>I</original>
    <variation>S</variation>
    <location>
        <position position="245"/>
    </location>
</feature>
<feature type="sequence variant" id="VAR_028422" description="In dbSNP:rs6665936." evidence="6 7 8 9 10 11">
    <original>C</original>
    <variation>G</variation>
    <location>
        <position position="247"/>
    </location>
</feature>
<feature type="sequence variant" id="VAR_028423" description="In dbSNP:rs6665937." evidence="6 7 8 9 10 11">
    <original>Y</original>
    <variation>D</variation>
    <location>
        <position position="249"/>
    </location>
</feature>
<feature type="sequence variant" id="VAR_028424" description="In dbSNP:rs6665944." evidence="6 7 8 9 10 11">
    <original>S</original>
    <variation>A</variation>
    <location>
        <position position="256"/>
    </location>
</feature>
<feature type="sequence conflict" description="In Ref. 5; BAD96233." evidence="12" ref="5">
    <original>N</original>
    <variation>S</variation>
    <location>
        <position position="374"/>
    </location>
</feature>
<feature type="strand" evidence="24">
    <location>
        <begin position="321"/>
        <end position="325"/>
    </location>
</feature>
<feature type="strand" evidence="24">
    <location>
        <begin position="328"/>
        <end position="333"/>
    </location>
</feature>
<feature type="strand" evidence="24">
    <location>
        <begin position="340"/>
        <end position="342"/>
    </location>
</feature>
<feature type="strand" evidence="24">
    <location>
        <begin position="350"/>
        <end position="355"/>
    </location>
</feature>
<feature type="strand" evidence="24">
    <location>
        <begin position="360"/>
        <end position="374"/>
    </location>
</feature>
<feature type="strand" evidence="24">
    <location>
        <begin position="376"/>
        <end position="393"/>
    </location>
</feature>
<feature type="strand" evidence="24">
    <location>
        <begin position="395"/>
        <end position="403"/>
    </location>
</feature>
<feature type="strand" evidence="24">
    <location>
        <begin position="406"/>
        <end position="412"/>
    </location>
</feature>
<feature type="strand" evidence="24">
    <location>
        <begin position="414"/>
        <end position="419"/>
    </location>
</feature>
<feature type="strand" evidence="24">
    <location>
        <begin position="428"/>
        <end position="433"/>
    </location>
</feature>
<feature type="strand" evidence="24">
    <location>
        <begin position="435"/>
        <end position="443"/>
    </location>
</feature>
<feature type="turn" evidence="24">
    <location>
        <begin position="444"/>
        <end position="446"/>
    </location>
</feature>
<feature type="strand" evidence="24">
    <location>
        <begin position="447"/>
        <end position="452"/>
    </location>
</feature>
<feature type="strand" evidence="24">
    <location>
        <begin position="456"/>
        <end position="461"/>
    </location>
</feature>
<feature type="strand" evidence="24">
    <location>
        <begin position="463"/>
        <end position="471"/>
    </location>
</feature>
<gene>
    <name type="primary">CAP1</name>
    <name type="synonym">CAP</name>
</gene>
<proteinExistence type="evidence at protein level"/>
<sequence>MADMQNLVERLERAVGRLEAVSHTSDMHRGYADSPSKAGAAPYVQAFDSLLAGPVAEYLKISKEIGGDVQKHAEMVHTGLKLERALLVTASQCQQPAENKLSDLLAPISEQIKEVITFREKNRGSKLFNHLSAVSESIQALGWVAMAPKPGPYVKEMNDAAMFYTNRVLKEYKDVDKKHVDWVKAYLSIWTELQAYIKEFHTTGLAWSKTGPVAKELSGLPSGPSAGSCPPPPPPCPPPPPVSTISCSYESASRSSLFAQINQGESITHALKHVSDDMKTHKNPALKAQSGPVRSGPKPFSAPKPQTSPSPKRATKKEPAVLELEGKKWRVENQENVSNLVIEDTELKQVAYIYKCVNTTLQIKGKINSITVDNCKKLGLVFDDVVGIVEIINSKDVKVQVMGKVPTISINKTDGCHAYLSKNSLDCEIVSAKSSEMNVLIPTEGGDFNEFPVPEQFKTLWNGQKLVTTVTEIAG</sequence>
<organism>
    <name type="scientific">Homo sapiens</name>
    <name type="common">Human</name>
    <dbReference type="NCBI Taxonomy" id="9606"/>
    <lineage>
        <taxon>Eukaryota</taxon>
        <taxon>Metazoa</taxon>
        <taxon>Chordata</taxon>
        <taxon>Craniata</taxon>
        <taxon>Vertebrata</taxon>
        <taxon>Euteleostomi</taxon>
        <taxon>Mammalia</taxon>
        <taxon>Eutheria</taxon>
        <taxon>Euarchontoglires</taxon>
        <taxon>Primates</taxon>
        <taxon>Haplorrhini</taxon>
        <taxon>Catarrhini</taxon>
        <taxon>Hominidae</taxon>
        <taxon>Homo</taxon>
    </lineage>
</organism>
<reference key="1">
    <citation type="journal article" date="1992" name="Mol. Cell. Biol.">
        <title>Identification of a human cDNA encoding a protein that is structurally and functionally related to the yeast adenylyl cyclase-associated CAP proteins.</title>
        <authorList>
            <person name="Matviw H."/>
            <person name="Yu G."/>
            <person name="Young D."/>
        </authorList>
    </citation>
    <scope>NUCLEOTIDE SEQUENCE [MRNA] (ISOFORM 1)</scope>
    <scope>VARIANTS GLY-229; GLY-236; SER-245; GLY-247; ASP-249 AND ALA-256</scope>
</reference>
<reference key="2">
    <citation type="submission" date="1993-03" db="EMBL/GenBank/DDBJ databases">
        <title>Genes from metazoans encoding homologs of yeast adenylyl cyclase-associated proteins.</title>
        <authorList>
            <person name="Kawamukai M."/>
            <person name="O'Neill K."/>
            <person name="Rodgers L."/>
            <person name="Riggs M."/>
            <person name="Schaller H.C."/>
            <person name="Chalfie M."/>
            <person name="Field J."/>
            <person name="Wigler M."/>
        </authorList>
    </citation>
    <scope>NUCLEOTIDE SEQUENCE [MRNA] (ISOFORM 1)</scope>
    <scope>VARIANTS GLY-229; GLY-236; SER-245; GLY-247; ASP-249 AND ALA-256</scope>
</reference>
<reference key="3">
    <citation type="submission" date="2003-05" db="EMBL/GenBank/DDBJ databases">
        <title>Cloning of human full-length CDSs in BD Creator(TM) system donor vector.</title>
        <authorList>
            <person name="Kalnine N."/>
            <person name="Chen X."/>
            <person name="Rolfs A."/>
            <person name="Halleck A."/>
            <person name="Hines L."/>
            <person name="Eisenstein S."/>
            <person name="Koundinya M."/>
            <person name="Raphael J."/>
            <person name="Moreira D."/>
            <person name="Kelley T."/>
            <person name="LaBaer J."/>
            <person name="Lin Y."/>
            <person name="Phelan M."/>
            <person name="Farmer A."/>
        </authorList>
    </citation>
    <scope>NUCLEOTIDE SEQUENCE [LARGE SCALE MRNA] (ISOFORM 1)</scope>
    <scope>VARIANTS GLY-229; GLY-236; SER-245; GLY-247; ASP-249 AND ALA-256</scope>
</reference>
<reference key="4">
    <citation type="submission" date="2004-06" db="EMBL/GenBank/DDBJ databases">
        <title>Cloning of human full open reading frames in Gateway(TM) system entry vector (pDONR201).</title>
        <authorList>
            <person name="Ebert L."/>
            <person name="Schick M."/>
            <person name="Neubert P."/>
            <person name="Schatten R."/>
            <person name="Henze S."/>
            <person name="Korn B."/>
        </authorList>
    </citation>
    <scope>NUCLEOTIDE SEQUENCE [LARGE SCALE MRNA] (ISOFORM 1)</scope>
    <scope>VARIANTS GLY-229; GLY-236; SER-245; GLY-247; ASP-249 AND ALA-256</scope>
</reference>
<reference key="5">
    <citation type="submission" date="2005-04" db="EMBL/GenBank/DDBJ databases">
        <authorList>
            <person name="Suzuki Y."/>
            <person name="Sugano S."/>
            <person name="Totoki Y."/>
            <person name="Toyoda A."/>
            <person name="Takeda T."/>
            <person name="Sakaki Y."/>
            <person name="Tanaka A."/>
            <person name="Yokoyama S."/>
        </authorList>
    </citation>
    <scope>NUCLEOTIDE SEQUENCE [LARGE SCALE MRNA] (ISOFORM 1)</scope>
    <scope>VARIANTS GLY-229; GLY-236; SER-245; GLY-247; ASP-249 AND ALA-256</scope>
    <source>
        <tissue>Adipose tissue</tissue>
    </source>
</reference>
<reference key="6">
    <citation type="journal article" date="2006" name="Nature">
        <title>The DNA sequence and biological annotation of human chromosome 1.</title>
        <authorList>
            <person name="Gregory S.G."/>
            <person name="Barlow K.F."/>
            <person name="McLay K.E."/>
            <person name="Kaul R."/>
            <person name="Swarbreck D."/>
            <person name="Dunham A."/>
            <person name="Scott C.E."/>
            <person name="Howe K.L."/>
            <person name="Woodfine K."/>
            <person name="Spencer C.C.A."/>
            <person name="Jones M.C."/>
            <person name="Gillson C."/>
            <person name="Searle S."/>
            <person name="Zhou Y."/>
            <person name="Kokocinski F."/>
            <person name="McDonald L."/>
            <person name="Evans R."/>
            <person name="Phillips K."/>
            <person name="Atkinson A."/>
            <person name="Cooper R."/>
            <person name="Jones C."/>
            <person name="Hall R.E."/>
            <person name="Andrews T.D."/>
            <person name="Lloyd C."/>
            <person name="Ainscough R."/>
            <person name="Almeida J.P."/>
            <person name="Ambrose K.D."/>
            <person name="Anderson F."/>
            <person name="Andrew R.W."/>
            <person name="Ashwell R.I.S."/>
            <person name="Aubin K."/>
            <person name="Babbage A.K."/>
            <person name="Bagguley C.L."/>
            <person name="Bailey J."/>
            <person name="Beasley H."/>
            <person name="Bethel G."/>
            <person name="Bird C.P."/>
            <person name="Bray-Allen S."/>
            <person name="Brown J.Y."/>
            <person name="Brown A.J."/>
            <person name="Buckley D."/>
            <person name="Burton J."/>
            <person name="Bye J."/>
            <person name="Carder C."/>
            <person name="Chapman J.C."/>
            <person name="Clark S.Y."/>
            <person name="Clarke G."/>
            <person name="Clee C."/>
            <person name="Cobley V."/>
            <person name="Collier R.E."/>
            <person name="Corby N."/>
            <person name="Coville G.J."/>
            <person name="Davies J."/>
            <person name="Deadman R."/>
            <person name="Dunn M."/>
            <person name="Earthrowl M."/>
            <person name="Ellington A.G."/>
            <person name="Errington H."/>
            <person name="Frankish A."/>
            <person name="Frankland J."/>
            <person name="French L."/>
            <person name="Garner P."/>
            <person name="Garnett J."/>
            <person name="Gay L."/>
            <person name="Ghori M.R.J."/>
            <person name="Gibson R."/>
            <person name="Gilby L.M."/>
            <person name="Gillett W."/>
            <person name="Glithero R.J."/>
            <person name="Grafham D.V."/>
            <person name="Griffiths C."/>
            <person name="Griffiths-Jones S."/>
            <person name="Grocock R."/>
            <person name="Hammond S."/>
            <person name="Harrison E.S.I."/>
            <person name="Hart E."/>
            <person name="Haugen E."/>
            <person name="Heath P.D."/>
            <person name="Holmes S."/>
            <person name="Holt K."/>
            <person name="Howden P.J."/>
            <person name="Hunt A.R."/>
            <person name="Hunt S.E."/>
            <person name="Hunter G."/>
            <person name="Isherwood J."/>
            <person name="James R."/>
            <person name="Johnson C."/>
            <person name="Johnson D."/>
            <person name="Joy A."/>
            <person name="Kay M."/>
            <person name="Kershaw J.K."/>
            <person name="Kibukawa M."/>
            <person name="Kimberley A.M."/>
            <person name="King A."/>
            <person name="Knights A.J."/>
            <person name="Lad H."/>
            <person name="Laird G."/>
            <person name="Lawlor S."/>
            <person name="Leongamornlert D.A."/>
            <person name="Lloyd D.M."/>
            <person name="Loveland J."/>
            <person name="Lovell J."/>
            <person name="Lush M.J."/>
            <person name="Lyne R."/>
            <person name="Martin S."/>
            <person name="Mashreghi-Mohammadi M."/>
            <person name="Matthews L."/>
            <person name="Matthews N.S.W."/>
            <person name="McLaren S."/>
            <person name="Milne S."/>
            <person name="Mistry S."/>
            <person name="Moore M.J.F."/>
            <person name="Nickerson T."/>
            <person name="O'Dell C.N."/>
            <person name="Oliver K."/>
            <person name="Palmeiri A."/>
            <person name="Palmer S.A."/>
            <person name="Parker A."/>
            <person name="Patel D."/>
            <person name="Pearce A.V."/>
            <person name="Peck A.I."/>
            <person name="Pelan S."/>
            <person name="Phelps K."/>
            <person name="Phillimore B.J."/>
            <person name="Plumb R."/>
            <person name="Rajan J."/>
            <person name="Raymond C."/>
            <person name="Rouse G."/>
            <person name="Saenphimmachak C."/>
            <person name="Sehra H.K."/>
            <person name="Sheridan E."/>
            <person name="Shownkeen R."/>
            <person name="Sims S."/>
            <person name="Skuce C.D."/>
            <person name="Smith M."/>
            <person name="Steward C."/>
            <person name="Subramanian S."/>
            <person name="Sycamore N."/>
            <person name="Tracey A."/>
            <person name="Tromans A."/>
            <person name="Van Helmond Z."/>
            <person name="Wall M."/>
            <person name="Wallis J.M."/>
            <person name="White S."/>
            <person name="Whitehead S.L."/>
            <person name="Wilkinson J.E."/>
            <person name="Willey D.L."/>
            <person name="Williams H."/>
            <person name="Wilming L."/>
            <person name="Wray P.W."/>
            <person name="Wu Z."/>
            <person name="Coulson A."/>
            <person name="Vaudin M."/>
            <person name="Sulston J.E."/>
            <person name="Durbin R.M."/>
            <person name="Hubbard T."/>
            <person name="Wooster R."/>
            <person name="Dunham I."/>
            <person name="Carter N.P."/>
            <person name="McVean G."/>
            <person name="Ross M.T."/>
            <person name="Harrow J."/>
            <person name="Olson M.V."/>
            <person name="Beck S."/>
            <person name="Rogers J."/>
            <person name="Bentley D.R."/>
        </authorList>
    </citation>
    <scope>NUCLEOTIDE SEQUENCE [LARGE SCALE GENOMIC DNA]</scope>
    <scope>ALTERNATIVE SPLICING</scope>
</reference>
<reference key="7">
    <citation type="journal article" date="2004" name="Genome Res.">
        <title>The status, quality, and expansion of the NIH full-length cDNA project: the Mammalian Gene Collection (MGC).</title>
        <authorList>
            <consortium name="The MGC Project Team"/>
        </authorList>
    </citation>
    <scope>NUCLEOTIDE SEQUENCE [LARGE SCALE MRNA] (ISOFORM 1)</scope>
    <scope>VARIANTS GLY-229; GLY-236; SER-245; GLY-247; ASP-249 AND ALA-256</scope>
    <source>
        <tissue>Kidney</tissue>
    </source>
</reference>
<reference key="8">
    <citation type="journal article" date="2003" name="Nat. Biotechnol.">
        <title>Exploring proteomes and analyzing protein processing by mass spectrometric identification of sorted N-terminal peptides.</title>
        <authorList>
            <person name="Gevaert K."/>
            <person name="Goethals M."/>
            <person name="Martens L."/>
            <person name="Van Damme J."/>
            <person name="Staes A."/>
            <person name="Thomas G.R."/>
            <person name="Vandekerckhove J."/>
        </authorList>
    </citation>
    <scope>PROTEIN SEQUENCE OF 2-10</scope>
    <scope>ACETYLATION AT ALA-2</scope>
    <source>
        <tissue>Platelet</tissue>
    </source>
</reference>
<reference key="9">
    <citation type="journal article" date="2006" name="Cell">
        <title>Global, in vivo, and site-specific phosphorylation dynamics in signaling networks.</title>
        <authorList>
            <person name="Olsen J.V."/>
            <person name="Blagoev B."/>
            <person name="Gnad F."/>
            <person name="Macek B."/>
            <person name="Kumar C."/>
            <person name="Mortensen P."/>
            <person name="Mann M."/>
        </authorList>
    </citation>
    <scope>IDENTIFICATION BY MASS SPECTROMETRY [LARGE SCALE ANALYSIS]</scope>
    <source>
        <tissue>Cervix carcinoma</tissue>
    </source>
</reference>
<reference key="10">
    <citation type="journal article" date="2006" name="Pituitary">
        <title>Phosphoproteomic analysis of the human pituitary.</title>
        <authorList>
            <person name="Beranova-Giorgianni S."/>
            <person name="Zhao Y."/>
            <person name="Desiderio D.M."/>
            <person name="Giorgianni F."/>
        </authorList>
    </citation>
    <scope>IDENTIFICATION BY MASS SPECTROMETRY [LARGE SCALE ANALYSIS]</scope>
    <source>
        <tissue>Pituitary</tissue>
    </source>
</reference>
<reference key="11">
    <citation type="journal article" date="2008" name="J. Proteome Res.">
        <title>Phosphorylation analysis of primary human T lymphocytes using sequential IMAC and titanium oxide enrichment.</title>
        <authorList>
            <person name="Carrascal M."/>
            <person name="Ovelleiro D."/>
            <person name="Casas V."/>
            <person name="Gay M."/>
            <person name="Abian J."/>
        </authorList>
    </citation>
    <scope>IDENTIFICATION BY MASS SPECTROMETRY [LARGE SCALE ANALYSIS]</scope>
    <source>
        <tissue>T-cell</tissue>
    </source>
</reference>
<reference key="12">
    <citation type="journal article" date="2008" name="J. Proteome Res.">
        <title>Phosphoproteome of resting human platelets.</title>
        <authorList>
            <person name="Zahedi R.P."/>
            <person name="Lewandrowski U."/>
            <person name="Wiesner J."/>
            <person name="Wortelkamp S."/>
            <person name="Moebius J."/>
            <person name="Schuetz C."/>
            <person name="Walter U."/>
            <person name="Gambaryan S."/>
            <person name="Sickmann A."/>
        </authorList>
    </citation>
    <scope>IDENTIFICATION BY MASS SPECTROMETRY [LARGE SCALE ANALYSIS]</scope>
    <source>
        <tissue>Platelet</tissue>
    </source>
</reference>
<reference key="13">
    <citation type="journal article" date="2008" name="Proc. Natl. Acad. Sci. U.S.A.">
        <title>A quantitative atlas of mitotic phosphorylation.</title>
        <authorList>
            <person name="Dephoure N."/>
            <person name="Zhou C."/>
            <person name="Villen J."/>
            <person name="Beausoleil S.A."/>
            <person name="Bakalarski C.E."/>
            <person name="Elledge S.J."/>
            <person name="Gygi S.P."/>
        </authorList>
    </citation>
    <scope>PHOSPHORYLATION [LARGE SCALE ANALYSIS] AT SER-295; SER-308 AND SER-310</scope>
    <scope>IDENTIFICATION BY MASS SPECTROMETRY [LARGE SCALE ANALYSIS]</scope>
    <source>
        <tissue>Cervix carcinoma</tissue>
    </source>
</reference>
<reference key="14">
    <citation type="journal article" date="2009" name="Anal. Chem.">
        <title>Lys-N and trypsin cover complementary parts of the phosphoproteome in a refined SCX-based approach.</title>
        <authorList>
            <person name="Gauci S."/>
            <person name="Helbig A.O."/>
            <person name="Slijper M."/>
            <person name="Krijgsveld J."/>
            <person name="Heck A.J."/>
            <person name="Mohammed S."/>
        </authorList>
    </citation>
    <scope>ACETYLATION [LARGE SCALE ANALYSIS] AT ALA-2</scope>
    <scope>CLEAVAGE OF INITIATOR METHIONINE [LARGE SCALE ANALYSIS]</scope>
    <scope>IDENTIFICATION BY MASS SPECTROMETRY [LARGE SCALE ANALYSIS]</scope>
</reference>
<reference key="15">
    <citation type="journal article" date="2009" name="Sci. Signal.">
        <title>Quantitative phosphoproteomic analysis of T cell receptor signaling reveals system-wide modulation of protein-protein interactions.</title>
        <authorList>
            <person name="Mayya V."/>
            <person name="Lundgren D.H."/>
            <person name="Hwang S.-I."/>
            <person name="Rezaul K."/>
            <person name="Wu L."/>
            <person name="Eng J.K."/>
            <person name="Rodionov V."/>
            <person name="Han D.K."/>
        </authorList>
    </citation>
    <scope>PHOSPHORYLATION [LARGE SCALE ANALYSIS] AT SER-310</scope>
    <scope>IDENTIFICATION BY MASS SPECTROMETRY [LARGE SCALE ANALYSIS]</scope>
    <source>
        <tissue>Leukemic T-cell</tissue>
    </source>
</reference>
<reference key="16">
    <citation type="journal article" date="2009" name="Science">
        <title>Lysine acetylation targets protein complexes and co-regulates major cellular functions.</title>
        <authorList>
            <person name="Choudhary C."/>
            <person name="Kumar C."/>
            <person name="Gnad F."/>
            <person name="Nielsen M.L."/>
            <person name="Rehman M."/>
            <person name="Walther T.C."/>
            <person name="Olsen J.V."/>
            <person name="Mann M."/>
        </authorList>
    </citation>
    <scope>ACETYLATION [LARGE SCALE ANALYSIS] AT LYS-81</scope>
    <scope>IDENTIFICATION BY MASS SPECTROMETRY [LARGE SCALE ANALYSIS]</scope>
</reference>
<reference key="17">
    <citation type="journal article" date="2010" name="Sci. Signal.">
        <title>Quantitative phosphoproteomics reveals widespread full phosphorylation site occupancy during mitosis.</title>
        <authorList>
            <person name="Olsen J.V."/>
            <person name="Vermeulen M."/>
            <person name="Santamaria A."/>
            <person name="Kumar C."/>
            <person name="Miller M.L."/>
            <person name="Jensen L.J."/>
            <person name="Gnad F."/>
            <person name="Cox J."/>
            <person name="Jensen T.S."/>
            <person name="Nigg E.A."/>
            <person name="Brunak S."/>
            <person name="Mann M."/>
        </authorList>
    </citation>
    <scope>PHOSPHORYLATION [LARGE SCALE ANALYSIS] AT THR-307; SER-308 AND SER-310</scope>
    <scope>IDENTIFICATION BY MASS SPECTROMETRY [LARGE SCALE ANALYSIS]</scope>
    <source>
        <tissue>Cervix carcinoma</tissue>
    </source>
</reference>
<reference key="18">
    <citation type="journal article" date="2011" name="BMC Syst. Biol.">
        <title>Initial characterization of the human central proteome.</title>
        <authorList>
            <person name="Burkard T.R."/>
            <person name="Planyavsky M."/>
            <person name="Kaupe I."/>
            <person name="Breitwieser F.P."/>
            <person name="Buerckstuemmer T."/>
            <person name="Bennett K.L."/>
            <person name="Superti-Furga G."/>
            <person name="Colinge J."/>
        </authorList>
    </citation>
    <scope>IDENTIFICATION BY MASS SPECTROMETRY [LARGE SCALE ANALYSIS]</scope>
</reference>
<reference key="19">
    <citation type="journal article" date="2011" name="Sci. Signal.">
        <title>System-wide temporal characterization of the proteome and phosphoproteome of human embryonic stem cell differentiation.</title>
        <authorList>
            <person name="Rigbolt K.T."/>
            <person name="Prokhorova T.A."/>
            <person name="Akimov V."/>
            <person name="Henningsen J."/>
            <person name="Johansen P.T."/>
            <person name="Kratchmarova I."/>
            <person name="Kassem M."/>
            <person name="Mann M."/>
            <person name="Olsen J.V."/>
            <person name="Blagoev B."/>
        </authorList>
    </citation>
    <scope>PHOSPHORYLATION [LARGE SCALE ANALYSIS] AT SER-34; SER-290; SER-295; SER-301; SER-308 AND SER-310</scope>
    <scope>IDENTIFICATION BY MASS SPECTROMETRY [LARGE SCALE ANALYSIS]</scope>
</reference>
<reference key="20">
    <citation type="journal article" date="2012" name="Mol. Cell. Proteomics">
        <title>Comparative large-scale characterisation of plant vs. mammal proteins reveals similar and idiosyncratic N-alpha acetylation features.</title>
        <authorList>
            <person name="Bienvenut W.V."/>
            <person name="Sumpton D."/>
            <person name="Martinez A."/>
            <person name="Lilla S."/>
            <person name="Espagne C."/>
            <person name="Meinnel T."/>
            <person name="Giglione C."/>
        </authorList>
    </citation>
    <scope>ACETYLATION [LARGE SCALE ANALYSIS] AT ALA-2</scope>
    <scope>CLEAVAGE OF INITIATOR METHIONINE [LARGE SCALE ANALYSIS]</scope>
    <scope>IDENTIFICATION BY MASS SPECTROMETRY [LARGE SCALE ANALYSIS]</scope>
</reference>
<reference key="21">
    <citation type="journal article" date="2012" name="Proc. Natl. Acad. Sci. U.S.A.">
        <title>N-terminal acetylome analyses and functional insights of the N-terminal acetyltransferase NatB.</title>
        <authorList>
            <person name="Van Damme P."/>
            <person name="Lasa M."/>
            <person name="Polevoda B."/>
            <person name="Gazquez C."/>
            <person name="Elosegui-Artola A."/>
            <person name="Kim D.S."/>
            <person name="De Juan-Pardo E."/>
            <person name="Demeyer K."/>
            <person name="Hole K."/>
            <person name="Larrea E."/>
            <person name="Timmerman E."/>
            <person name="Prieto J."/>
            <person name="Arnesen T."/>
            <person name="Sherman F."/>
            <person name="Gevaert K."/>
            <person name="Aldabe R."/>
        </authorList>
    </citation>
    <scope>ACETYLATION [LARGE SCALE ANALYSIS] AT ALA-2</scope>
    <scope>CLEAVAGE OF INITIATOR METHIONINE [LARGE SCALE ANALYSIS]</scope>
    <scope>IDENTIFICATION BY MASS SPECTROMETRY [LARGE SCALE ANALYSIS]</scope>
</reference>
<reference key="22">
    <citation type="journal article" date="2013" name="J. Proteome Res.">
        <title>Toward a comprehensive characterization of a human cancer cell phosphoproteome.</title>
        <authorList>
            <person name="Zhou H."/>
            <person name="Di Palma S."/>
            <person name="Preisinger C."/>
            <person name="Peng M."/>
            <person name="Polat A.N."/>
            <person name="Heck A.J."/>
            <person name="Mohammed S."/>
        </authorList>
    </citation>
    <scope>PHOSPHORYLATION [LARGE SCALE ANALYSIS] AT SER-308 AND SER-310</scope>
    <scope>IDENTIFICATION BY MASS SPECTROMETRY [LARGE SCALE ANALYSIS]</scope>
    <source>
        <tissue>Cervix carcinoma</tissue>
        <tissue>Erythroleukemia</tissue>
    </source>
</reference>
<reference key="23">
    <citation type="journal article" date="2014" name="J. Proteomics">
        <title>An enzyme assisted RP-RPLC approach for in-depth analysis of human liver phosphoproteome.</title>
        <authorList>
            <person name="Bian Y."/>
            <person name="Song C."/>
            <person name="Cheng K."/>
            <person name="Dong M."/>
            <person name="Wang F."/>
            <person name="Huang J."/>
            <person name="Sun D."/>
            <person name="Wang L."/>
            <person name="Ye M."/>
            <person name="Zou H."/>
        </authorList>
    </citation>
    <scope>IDENTIFICATION BY MASS SPECTROMETRY [LARGE SCALE ANALYSIS]</scope>
    <source>
        <tissue>Liver</tissue>
    </source>
</reference>
<reference key="24">
    <citation type="journal article" date="2014" name="Mol. Cell. Proteomics">
        <title>Immunoaffinity enrichment and mass spectrometry analysis of protein methylation.</title>
        <authorList>
            <person name="Guo A."/>
            <person name="Gu H."/>
            <person name="Zhou J."/>
            <person name="Mulhern D."/>
            <person name="Wang Y."/>
            <person name="Lee K.A."/>
            <person name="Yang V."/>
            <person name="Aguiar M."/>
            <person name="Kornhauser J."/>
            <person name="Jia X."/>
            <person name="Ren J."/>
            <person name="Beausoleil S.A."/>
            <person name="Silva J.C."/>
            <person name="Vemulapalli V."/>
            <person name="Bedford M.T."/>
            <person name="Comb M.J."/>
        </authorList>
    </citation>
    <scope>METHYLATION [LARGE SCALE ANALYSIS] AT LYS-287</scope>
    <scope>IDENTIFICATION BY MASS SPECTROMETRY [LARGE SCALE ANALYSIS]</scope>
    <source>
        <tissue>Colon carcinoma</tissue>
    </source>
</reference>
<reference key="25">
    <citation type="journal article" date="2014" name="Proc. Natl. Acad. Sci. U.S.A.">
        <title>Mapping of SUMO sites and analysis of SUMOylation changes induced by external stimuli.</title>
        <authorList>
            <person name="Impens F."/>
            <person name="Radoshevich L."/>
            <person name="Cossart P."/>
            <person name="Ribet D."/>
        </authorList>
    </citation>
    <scope>SUMOYLATION [LARGE SCALE ANALYSIS] AT LYS-348</scope>
    <scope>IDENTIFICATION BY MASS SPECTROMETRY [LARGE SCALE ANALYSIS]</scope>
</reference>
<reference key="26">
    <citation type="journal article" date="2015" name="Proteomics">
        <title>N-terminome analysis of the human mitochondrial proteome.</title>
        <authorList>
            <person name="Vaca Jacome A.S."/>
            <person name="Rabilloud T."/>
            <person name="Schaeffer-Reiss C."/>
            <person name="Rompais M."/>
            <person name="Ayoub D."/>
            <person name="Lane L."/>
            <person name="Bairoch A."/>
            <person name="Van Dorsselaer A."/>
            <person name="Carapito C."/>
        </authorList>
    </citation>
    <scope>IDENTIFICATION BY MASS SPECTROMETRY [LARGE SCALE ANALYSIS]</scope>
</reference>
<reference key="27">
    <citation type="journal article" date="2004" name="Biochemistry">
        <title>Crystal structure of the actin binding domain of the cyclase-associated protein.</title>
        <authorList>
            <person name="Dodatko T."/>
            <person name="Fedorov A.A."/>
            <person name="Grynberg M."/>
            <person name="Patskovsky Y."/>
            <person name="Rozwarski D.A."/>
            <person name="Jaroszewski L."/>
            <person name="Aronoff-Spencer E."/>
            <person name="Kondraskina E."/>
            <person name="Irving T."/>
            <person name="Godzik A."/>
            <person name="Almo S.C."/>
        </authorList>
    </citation>
    <scope>X-RAY CRYSTALLOGRAPHY (2.8 ANGSTROMS) OF 319-475</scope>
</reference>
<protein>
    <recommendedName>
        <fullName>Adenylyl cyclase-associated protein 1</fullName>
        <shortName>CAP 1</shortName>
    </recommendedName>
</protein>
<accession>Q01518</accession>
<accession>Q53HR7</accession>
<accession>Q5T0S1</accession>
<accession>Q5T0S2</accession>
<accession>Q6I9U6</accession>
<name>CAP1_HUMAN</name>